<protein>
    <recommendedName>
        <fullName evidence="1">4-hydroxy-3-methylbut-2-enyl diphosphate reductase</fullName>
        <shortName evidence="1">HMBPP reductase</shortName>
        <ecNumber evidence="1">1.17.7.4</ecNumber>
    </recommendedName>
</protein>
<accession>A5FPY7</accession>
<feature type="chain" id="PRO_1000077514" description="4-hydroxy-3-methylbut-2-enyl diphosphate reductase">
    <location>
        <begin position="1"/>
        <end position="284"/>
    </location>
</feature>
<feature type="active site" description="Proton donor" evidence="1">
    <location>
        <position position="124"/>
    </location>
</feature>
<feature type="binding site" evidence="1">
    <location>
        <position position="12"/>
    </location>
    <ligand>
        <name>[4Fe-4S] cluster</name>
        <dbReference type="ChEBI" id="CHEBI:49883"/>
    </ligand>
</feature>
<feature type="binding site" evidence="1">
    <location>
        <position position="40"/>
    </location>
    <ligand>
        <name>(2E)-4-hydroxy-3-methylbut-2-enyl diphosphate</name>
        <dbReference type="ChEBI" id="CHEBI:128753"/>
    </ligand>
</feature>
<feature type="binding site" evidence="1">
    <location>
        <position position="40"/>
    </location>
    <ligand>
        <name>dimethylallyl diphosphate</name>
        <dbReference type="ChEBI" id="CHEBI:57623"/>
    </ligand>
</feature>
<feature type="binding site" evidence="1">
    <location>
        <position position="40"/>
    </location>
    <ligand>
        <name>isopentenyl diphosphate</name>
        <dbReference type="ChEBI" id="CHEBI:128769"/>
    </ligand>
</feature>
<feature type="binding site" evidence="1">
    <location>
        <position position="72"/>
    </location>
    <ligand>
        <name>(2E)-4-hydroxy-3-methylbut-2-enyl diphosphate</name>
        <dbReference type="ChEBI" id="CHEBI:128753"/>
    </ligand>
</feature>
<feature type="binding site" evidence="1">
    <location>
        <position position="72"/>
    </location>
    <ligand>
        <name>dimethylallyl diphosphate</name>
        <dbReference type="ChEBI" id="CHEBI:57623"/>
    </ligand>
</feature>
<feature type="binding site" evidence="1">
    <location>
        <position position="72"/>
    </location>
    <ligand>
        <name>isopentenyl diphosphate</name>
        <dbReference type="ChEBI" id="CHEBI:128769"/>
    </ligand>
</feature>
<feature type="binding site" evidence="1">
    <location>
        <position position="94"/>
    </location>
    <ligand>
        <name>[4Fe-4S] cluster</name>
        <dbReference type="ChEBI" id="CHEBI:49883"/>
    </ligand>
</feature>
<feature type="binding site" evidence="1">
    <location>
        <position position="122"/>
    </location>
    <ligand>
        <name>(2E)-4-hydroxy-3-methylbut-2-enyl diphosphate</name>
        <dbReference type="ChEBI" id="CHEBI:128753"/>
    </ligand>
</feature>
<feature type="binding site" evidence="1">
    <location>
        <position position="122"/>
    </location>
    <ligand>
        <name>dimethylallyl diphosphate</name>
        <dbReference type="ChEBI" id="CHEBI:57623"/>
    </ligand>
</feature>
<feature type="binding site" evidence="1">
    <location>
        <position position="122"/>
    </location>
    <ligand>
        <name>isopentenyl diphosphate</name>
        <dbReference type="ChEBI" id="CHEBI:128769"/>
    </ligand>
</feature>
<feature type="binding site" evidence="1">
    <location>
        <position position="161"/>
    </location>
    <ligand>
        <name>(2E)-4-hydroxy-3-methylbut-2-enyl diphosphate</name>
        <dbReference type="ChEBI" id="CHEBI:128753"/>
    </ligand>
</feature>
<feature type="binding site" evidence="1">
    <location>
        <position position="193"/>
    </location>
    <ligand>
        <name>[4Fe-4S] cluster</name>
        <dbReference type="ChEBI" id="CHEBI:49883"/>
    </ligand>
</feature>
<feature type="binding site" evidence="1">
    <location>
        <position position="221"/>
    </location>
    <ligand>
        <name>(2E)-4-hydroxy-3-methylbut-2-enyl diphosphate</name>
        <dbReference type="ChEBI" id="CHEBI:128753"/>
    </ligand>
</feature>
<feature type="binding site" evidence="1">
    <location>
        <position position="221"/>
    </location>
    <ligand>
        <name>dimethylallyl diphosphate</name>
        <dbReference type="ChEBI" id="CHEBI:57623"/>
    </ligand>
</feature>
<feature type="binding site" evidence="1">
    <location>
        <position position="221"/>
    </location>
    <ligand>
        <name>isopentenyl diphosphate</name>
        <dbReference type="ChEBI" id="CHEBI:128769"/>
    </ligand>
</feature>
<feature type="binding site" evidence="1">
    <location>
        <position position="223"/>
    </location>
    <ligand>
        <name>(2E)-4-hydroxy-3-methylbut-2-enyl diphosphate</name>
        <dbReference type="ChEBI" id="CHEBI:128753"/>
    </ligand>
</feature>
<feature type="binding site" evidence="1">
    <location>
        <position position="223"/>
    </location>
    <ligand>
        <name>dimethylallyl diphosphate</name>
        <dbReference type="ChEBI" id="CHEBI:57623"/>
    </ligand>
</feature>
<feature type="binding site" evidence="1">
    <location>
        <position position="223"/>
    </location>
    <ligand>
        <name>isopentenyl diphosphate</name>
        <dbReference type="ChEBI" id="CHEBI:128769"/>
    </ligand>
</feature>
<feature type="binding site" evidence="1">
    <location>
        <position position="264"/>
    </location>
    <ligand>
        <name>(2E)-4-hydroxy-3-methylbut-2-enyl diphosphate</name>
        <dbReference type="ChEBI" id="CHEBI:128753"/>
    </ligand>
</feature>
<feature type="binding site" evidence="1">
    <location>
        <position position="264"/>
    </location>
    <ligand>
        <name>dimethylallyl diphosphate</name>
        <dbReference type="ChEBI" id="CHEBI:57623"/>
    </ligand>
</feature>
<feature type="binding site" evidence="1">
    <location>
        <position position="264"/>
    </location>
    <ligand>
        <name>isopentenyl diphosphate</name>
        <dbReference type="ChEBI" id="CHEBI:128769"/>
    </ligand>
</feature>
<sequence>MKVECASNIGFCFGVHRAINILEKTASERGGVETLGALVHNQQVLNRLSGMGVRVVKNIDDISGRTVAISSHGVGPAVLAELKSKGLEIVDTTCPFVKRAQVAAKRFHDAGFFTVIYGDVNHPEVKGILGWAGGNGLATLNPQGLDDIPDLSRYIGVLSQTTQIPTGFTSFVKNVIDQALVKDAEIRIADTLCHDIRDRQAAALELAGRVDLMLVIGGHNSANTRHLLDLCKTVSNTHLIETASELQTDWLKGVSRIGITSGASTDETTISEVCSYLDRLSAGA</sequence>
<dbReference type="EC" id="1.17.7.4" evidence="1"/>
<dbReference type="EMBL" id="CP000688">
    <property type="protein sequence ID" value="ABQ17734.1"/>
    <property type="molecule type" value="Genomic_DNA"/>
</dbReference>
<dbReference type="SMR" id="A5FPY7"/>
<dbReference type="KEGG" id="deb:DehaBAV1_1155"/>
<dbReference type="PATRIC" id="fig|216389.18.peg.1218"/>
<dbReference type="HOGENOM" id="CLU_027486_0_1_0"/>
<dbReference type="UniPathway" id="UPA00056">
    <property type="reaction ID" value="UER00097"/>
</dbReference>
<dbReference type="UniPathway" id="UPA00059">
    <property type="reaction ID" value="UER00105"/>
</dbReference>
<dbReference type="GO" id="GO:0051539">
    <property type="term" value="F:4 iron, 4 sulfur cluster binding"/>
    <property type="evidence" value="ECO:0007669"/>
    <property type="project" value="UniProtKB-UniRule"/>
</dbReference>
<dbReference type="GO" id="GO:0051745">
    <property type="term" value="F:4-hydroxy-3-methylbut-2-enyl diphosphate reductase activity"/>
    <property type="evidence" value="ECO:0007669"/>
    <property type="project" value="UniProtKB-UniRule"/>
</dbReference>
<dbReference type="GO" id="GO:0046872">
    <property type="term" value="F:metal ion binding"/>
    <property type="evidence" value="ECO:0007669"/>
    <property type="project" value="UniProtKB-KW"/>
</dbReference>
<dbReference type="GO" id="GO:0050992">
    <property type="term" value="P:dimethylallyl diphosphate biosynthetic process"/>
    <property type="evidence" value="ECO:0007669"/>
    <property type="project" value="UniProtKB-UniRule"/>
</dbReference>
<dbReference type="GO" id="GO:0019288">
    <property type="term" value="P:isopentenyl diphosphate biosynthetic process, methylerythritol 4-phosphate pathway"/>
    <property type="evidence" value="ECO:0007669"/>
    <property type="project" value="UniProtKB-UniRule"/>
</dbReference>
<dbReference type="GO" id="GO:0016114">
    <property type="term" value="P:terpenoid biosynthetic process"/>
    <property type="evidence" value="ECO:0007669"/>
    <property type="project" value="UniProtKB-UniRule"/>
</dbReference>
<dbReference type="CDD" id="cd13944">
    <property type="entry name" value="lytB_ispH"/>
    <property type="match status" value="1"/>
</dbReference>
<dbReference type="Gene3D" id="3.40.50.11270">
    <property type="match status" value="1"/>
</dbReference>
<dbReference type="Gene3D" id="3.40.1010.20">
    <property type="entry name" value="4-hydroxy-3-methylbut-2-enyl diphosphate reductase, catalytic domain"/>
    <property type="match status" value="2"/>
</dbReference>
<dbReference type="HAMAP" id="MF_00191">
    <property type="entry name" value="IspH"/>
    <property type="match status" value="1"/>
</dbReference>
<dbReference type="InterPro" id="IPR003451">
    <property type="entry name" value="LytB/IspH"/>
</dbReference>
<dbReference type="NCBIfam" id="TIGR00216">
    <property type="entry name" value="ispH_lytB"/>
    <property type="match status" value="1"/>
</dbReference>
<dbReference type="PANTHER" id="PTHR30426">
    <property type="entry name" value="4-HYDROXY-3-METHYLBUT-2-ENYL DIPHOSPHATE REDUCTASE"/>
    <property type="match status" value="1"/>
</dbReference>
<dbReference type="PANTHER" id="PTHR30426:SF0">
    <property type="entry name" value="4-HYDROXY-3-METHYLBUT-2-ENYL DIPHOSPHATE REDUCTASE"/>
    <property type="match status" value="1"/>
</dbReference>
<dbReference type="Pfam" id="PF02401">
    <property type="entry name" value="LYTB"/>
    <property type="match status" value="1"/>
</dbReference>
<proteinExistence type="inferred from homology"/>
<organism>
    <name type="scientific">Dehalococcoides mccartyi (strain ATCC BAA-2100 / JCM 16839 / KCTC 5957 / BAV1)</name>
    <dbReference type="NCBI Taxonomy" id="216389"/>
    <lineage>
        <taxon>Bacteria</taxon>
        <taxon>Bacillati</taxon>
        <taxon>Chloroflexota</taxon>
        <taxon>Dehalococcoidia</taxon>
        <taxon>Dehalococcoidales</taxon>
        <taxon>Dehalococcoidaceae</taxon>
        <taxon>Dehalococcoides</taxon>
    </lineage>
</organism>
<gene>
    <name evidence="1" type="primary">ispH</name>
    <name type="ordered locus">DehaBAV1_1155</name>
</gene>
<keyword id="KW-0004">4Fe-4S</keyword>
<keyword id="KW-0408">Iron</keyword>
<keyword id="KW-0411">Iron-sulfur</keyword>
<keyword id="KW-0414">Isoprene biosynthesis</keyword>
<keyword id="KW-0479">Metal-binding</keyword>
<keyword id="KW-0560">Oxidoreductase</keyword>
<comment type="function">
    <text evidence="1">Catalyzes the conversion of 1-hydroxy-2-methyl-2-(E)-butenyl 4-diphosphate (HMBPP) into a mixture of isopentenyl diphosphate (IPP) and dimethylallyl diphosphate (DMAPP). Acts in the terminal step of the DOXP/MEP pathway for isoprenoid precursor biosynthesis.</text>
</comment>
<comment type="catalytic activity">
    <reaction evidence="1">
        <text>isopentenyl diphosphate + 2 oxidized [2Fe-2S]-[ferredoxin] + H2O = (2E)-4-hydroxy-3-methylbut-2-enyl diphosphate + 2 reduced [2Fe-2S]-[ferredoxin] + 2 H(+)</text>
        <dbReference type="Rhea" id="RHEA:24488"/>
        <dbReference type="Rhea" id="RHEA-COMP:10000"/>
        <dbReference type="Rhea" id="RHEA-COMP:10001"/>
        <dbReference type="ChEBI" id="CHEBI:15377"/>
        <dbReference type="ChEBI" id="CHEBI:15378"/>
        <dbReference type="ChEBI" id="CHEBI:33737"/>
        <dbReference type="ChEBI" id="CHEBI:33738"/>
        <dbReference type="ChEBI" id="CHEBI:128753"/>
        <dbReference type="ChEBI" id="CHEBI:128769"/>
        <dbReference type="EC" id="1.17.7.4"/>
    </reaction>
</comment>
<comment type="catalytic activity">
    <reaction evidence="1">
        <text>dimethylallyl diphosphate + 2 oxidized [2Fe-2S]-[ferredoxin] + H2O = (2E)-4-hydroxy-3-methylbut-2-enyl diphosphate + 2 reduced [2Fe-2S]-[ferredoxin] + 2 H(+)</text>
        <dbReference type="Rhea" id="RHEA:24825"/>
        <dbReference type="Rhea" id="RHEA-COMP:10000"/>
        <dbReference type="Rhea" id="RHEA-COMP:10001"/>
        <dbReference type="ChEBI" id="CHEBI:15377"/>
        <dbReference type="ChEBI" id="CHEBI:15378"/>
        <dbReference type="ChEBI" id="CHEBI:33737"/>
        <dbReference type="ChEBI" id="CHEBI:33738"/>
        <dbReference type="ChEBI" id="CHEBI:57623"/>
        <dbReference type="ChEBI" id="CHEBI:128753"/>
        <dbReference type="EC" id="1.17.7.4"/>
    </reaction>
</comment>
<comment type="cofactor">
    <cofactor evidence="1">
        <name>[4Fe-4S] cluster</name>
        <dbReference type="ChEBI" id="CHEBI:49883"/>
    </cofactor>
    <text evidence="1">Binds 1 [4Fe-4S] cluster per subunit.</text>
</comment>
<comment type="pathway">
    <text evidence="1">Isoprenoid biosynthesis; dimethylallyl diphosphate biosynthesis; dimethylallyl diphosphate from (2E)-4-hydroxy-3-methylbutenyl diphosphate: step 1/1.</text>
</comment>
<comment type="pathway">
    <text evidence="1">Isoprenoid biosynthesis; isopentenyl diphosphate biosynthesis via DXP pathway; isopentenyl diphosphate from 1-deoxy-D-xylulose 5-phosphate: step 6/6.</text>
</comment>
<comment type="similarity">
    <text evidence="1">Belongs to the IspH family.</text>
</comment>
<reference key="1">
    <citation type="submission" date="2007-05" db="EMBL/GenBank/DDBJ databases">
        <title>Complete sequence of Dehalococcoides sp. BAV1.</title>
        <authorList>
            <consortium name="US DOE Joint Genome Institute"/>
            <person name="Copeland A."/>
            <person name="Lucas S."/>
            <person name="Lapidus A."/>
            <person name="Barry K."/>
            <person name="Detter J.C."/>
            <person name="Glavina del Rio T."/>
            <person name="Hammon N."/>
            <person name="Israni S."/>
            <person name="Pitluck S."/>
            <person name="Lowry S."/>
            <person name="Clum A."/>
            <person name="Schmutz J."/>
            <person name="Larimer F."/>
            <person name="Land M."/>
            <person name="Hauser L."/>
            <person name="Kyrpides N."/>
            <person name="Kim E."/>
            <person name="Ritalahti K.M."/>
            <person name="Loeffler F."/>
            <person name="Richardson P."/>
        </authorList>
    </citation>
    <scope>NUCLEOTIDE SEQUENCE [LARGE SCALE GENOMIC DNA]</scope>
    <source>
        <strain>ATCC BAA-2100 / JCM 16839 / KCTC 5957 / BAV1</strain>
    </source>
</reference>
<evidence type="ECO:0000255" key="1">
    <source>
        <dbReference type="HAMAP-Rule" id="MF_00191"/>
    </source>
</evidence>
<name>ISPH_DEHMB</name>